<accession>P15886</accession>
<accession>A6URQ0</accession>
<sequence>MKKIISIKGTEKEVIEICERISKMGIDYSFDAKANYSENKAYNSARIKIFGEDKNKLVEDYKNILSIIEHVHNKYNVDVKGLYEYKLSDLKYPVNKDLVLDTLSALKINFKYLKDENVIKCELKVEELNDILKNILEIYSELNVYKLGSKPVKNVLALASYITGNDVNILLEKGLEKELFREENEKIVLNKDIDLTRKELLSVKK</sequence>
<feature type="chain" id="PRO_0000066464" description="Uncharacterized protein Mevan_1275">
    <location>
        <begin position="1"/>
        <end position="205"/>
    </location>
</feature>
<feature type="sequence conflict" description="In Ref. 1; CAA34155." evidence="1" ref="1">
    <original>A</original>
    <variation>C</variation>
    <location>
        <position position="32"/>
    </location>
</feature>
<feature type="sequence conflict" description="In Ref. 1; CAA34155." evidence="1" ref="1">
    <original>LTRKEL</original>
    <variation>YRKT</variation>
    <location>
        <begin position="195"/>
        <end position="200"/>
    </location>
</feature>
<comment type="sequence caution" evidence="1">
    <conflict type="frameshift">
        <sequence resource="EMBL-CDS" id="CAA34155"/>
    </conflict>
</comment>
<gene>
    <name type="ordered locus">Mevan_1275</name>
</gene>
<dbReference type="EMBL" id="X16023">
    <property type="protein sequence ID" value="CAA34155.1"/>
    <property type="status" value="ALT_FRAME"/>
    <property type="molecule type" value="Genomic_DNA"/>
</dbReference>
<dbReference type="EMBL" id="CP000742">
    <property type="protein sequence ID" value="ABR55172.1"/>
    <property type="molecule type" value="Genomic_DNA"/>
</dbReference>
<dbReference type="PIR" id="S08389">
    <property type="entry name" value="S08389"/>
</dbReference>
<dbReference type="RefSeq" id="WP_012066087.1">
    <property type="nucleotide sequence ID" value="NC_009634.1"/>
</dbReference>
<dbReference type="STRING" id="406327.Mevan_1275"/>
<dbReference type="GeneID" id="5324706"/>
<dbReference type="KEGG" id="mvn:Mevan_1275"/>
<dbReference type="eggNOG" id="arCOG00908">
    <property type="taxonomic scope" value="Archaea"/>
</dbReference>
<dbReference type="HOGENOM" id="CLU_1335063_0_0_2"/>
<dbReference type="OrthoDB" id="65057at2157"/>
<dbReference type="Proteomes" id="UP000001107">
    <property type="component" value="Chromosome"/>
</dbReference>
<dbReference type="InterPro" id="IPR019202">
    <property type="entry name" value="DUF2067"/>
</dbReference>
<dbReference type="Pfam" id="PF09840">
    <property type="entry name" value="DUF2067"/>
    <property type="match status" value="1"/>
</dbReference>
<name>Y1275_METVS</name>
<reference key="1">
    <citation type="journal article" date="1990" name="Nucleic Acids Res.">
        <title>Structure, organization and evolution of the L1 equivalent ribosomal protein gene of the archaebacterium Methanococcus vannielii.</title>
        <authorList>
            <person name="Baier G."/>
            <person name="Piendl W."/>
            <person name="Redl B."/>
            <person name="Stoeffler G."/>
        </authorList>
    </citation>
    <scope>NUCLEOTIDE SEQUENCE [GENOMIC DNA]</scope>
</reference>
<reference key="2">
    <citation type="submission" date="2007-06" db="EMBL/GenBank/DDBJ databases">
        <title>Complete sequence of Methanococcus vannielii SB.</title>
        <authorList>
            <consortium name="US DOE Joint Genome Institute"/>
            <person name="Copeland A."/>
            <person name="Lucas S."/>
            <person name="Lapidus A."/>
            <person name="Barry K."/>
            <person name="Glavina del Rio T."/>
            <person name="Dalin E."/>
            <person name="Tice H."/>
            <person name="Pitluck S."/>
            <person name="Chain P."/>
            <person name="Malfatti S."/>
            <person name="Shin M."/>
            <person name="Vergez L."/>
            <person name="Schmutz J."/>
            <person name="Larimer F."/>
            <person name="Land M."/>
            <person name="Hauser L."/>
            <person name="Kyrpides N."/>
            <person name="Anderson I."/>
            <person name="Sieprawska-Lupa M."/>
            <person name="Whitman W.B."/>
            <person name="Richardson P."/>
        </authorList>
    </citation>
    <scope>NUCLEOTIDE SEQUENCE [LARGE SCALE GENOMIC DNA]</scope>
    <source>
        <strain>ATCC 35089 / DSM 1224 / JCM 13029 / OCM 148 / SB</strain>
    </source>
</reference>
<proteinExistence type="predicted"/>
<evidence type="ECO:0000305" key="1"/>
<protein>
    <recommendedName>
        <fullName>Uncharacterized protein Mevan_1275</fullName>
    </recommendedName>
</protein>
<organism>
    <name type="scientific">Methanococcus vannielii (strain ATCC 35089 / DSM 1224 / JCM 13029 / OCM 148 / SB)</name>
    <dbReference type="NCBI Taxonomy" id="406327"/>
    <lineage>
        <taxon>Archaea</taxon>
        <taxon>Methanobacteriati</taxon>
        <taxon>Methanobacteriota</taxon>
        <taxon>Methanomada group</taxon>
        <taxon>Methanococci</taxon>
        <taxon>Methanococcales</taxon>
        <taxon>Methanococcaceae</taxon>
        <taxon>Methanococcus</taxon>
    </lineage>
</organism>